<protein>
    <recommendedName>
        <fullName>Melanoma receptor tyrosine-protein kinase</fullName>
        <ecNumber>2.7.10.1</ecNumber>
    </recommendedName>
</protein>
<comment type="function">
    <text>Probable receptor with tyrosine-protein kinase activity.</text>
</comment>
<comment type="catalytic activity">
    <reaction evidence="4">
        <text>L-tyrosyl-[protein] + ATP = O-phospho-L-tyrosyl-[protein] + ADP + H(+)</text>
        <dbReference type="Rhea" id="RHEA:10596"/>
        <dbReference type="Rhea" id="RHEA-COMP:10136"/>
        <dbReference type="Rhea" id="RHEA-COMP:20101"/>
        <dbReference type="ChEBI" id="CHEBI:15378"/>
        <dbReference type="ChEBI" id="CHEBI:30616"/>
        <dbReference type="ChEBI" id="CHEBI:46858"/>
        <dbReference type="ChEBI" id="CHEBI:61978"/>
        <dbReference type="ChEBI" id="CHEBI:456216"/>
        <dbReference type="EC" id="2.7.10.1"/>
    </reaction>
</comment>
<comment type="subcellular location">
    <subcellularLocation>
        <location>Membrane</location>
        <topology>Single-pass type I membrane protein</topology>
    </subcellularLocation>
</comment>
<comment type="disease">
    <text>Involved in pigment cells malignant melanomas.</text>
</comment>
<comment type="similarity">
    <text evidence="3">Belongs to the protein kinase superfamily. Tyr protein kinase family. EGF receptor subfamily.</text>
</comment>
<gene>
    <name type="primary">xmrk</name>
    <name type="synonym">tu</name>
</gene>
<feature type="signal peptide">
    <location>
        <begin position="1"/>
        <end position="25"/>
    </location>
</feature>
<feature type="chain" id="PRO_0000016678" description="Melanoma receptor tyrosine-protein kinase">
    <location>
        <begin position="26"/>
        <end position="1167"/>
    </location>
</feature>
<feature type="topological domain" description="Extracellular" evidence="2">
    <location>
        <begin position="26"/>
        <end position="642"/>
    </location>
</feature>
<feature type="transmembrane region" description="Helical" evidence="2">
    <location>
        <begin position="643"/>
        <end position="665"/>
    </location>
</feature>
<feature type="topological domain" description="Cytoplasmic" evidence="2">
    <location>
        <begin position="666"/>
        <end position="1167"/>
    </location>
</feature>
<feature type="domain" description="Protein kinase" evidence="3">
    <location>
        <begin position="710"/>
        <end position="977"/>
    </location>
</feature>
<feature type="active site" description="Proton acceptor" evidence="3 4">
    <location>
        <position position="835"/>
    </location>
</feature>
<feature type="binding site" evidence="3">
    <location>
        <begin position="716"/>
        <end position="724"/>
    </location>
    <ligand>
        <name>ATP</name>
        <dbReference type="ChEBI" id="CHEBI:30616"/>
    </ligand>
</feature>
<feature type="binding site" evidence="3">
    <location>
        <position position="743"/>
    </location>
    <ligand>
        <name>ATP</name>
        <dbReference type="ChEBI" id="CHEBI:30616"/>
    </ligand>
</feature>
<feature type="glycosylation site" description="N-linked (GlcNAc...) asparagine" evidence="2">
    <location>
        <position position="114"/>
    </location>
</feature>
<feature type="glycosylation site" description="N-linked (GlcNAc...) asparagine" evidence="2">
    <location>
        <position position="144"/>
    </location>
</feature>
<feature type="glycosylation site" description="N-linked (GlcNAc...) asparagine" evidence="2">
    <location>
        <position position="201"/>
    </location>
</feature>
<feature type="glycosylation site" description="N-linked (GlcNAc...) asparagine" evidence="2">
    <location>
        <position position="356"/>
    </location>
</feature>
<feature type="glycosylation site" description="N-linked (GlcNAc...) asparagine" evidence="2">
    <location>
        <position position="365"/>
    </location>
</feature>
<feature type="glycosylation site" description="N-linked (GlcNAc...) asparagine" evidence="2">
    <location>
        <position position="398"/>
    </location>
</feature>
<feature type="glycosylation site" description="N-linked (GlcNAc...) asparagine" evidence="2">
    <location>
        <position position="417"/>
    </location>
</feature>
<feature type="glycosylation site" description="N-linked (GlcNAc...) asparagine" evidence="2">
    <location>
        <position position="501"/>
    </location>
</feature>
<feature type="glycosylation site" description="N-linked (GlcNAc...) asparagine" evidence="2">
    <location>
        <position position="576"/>
    </location>
</feature>
<feature type="glycosylation site" description="N-linked (GlcNAc...) asparagine" evidence="2">
    <location>
        <position position="621"/>
    </location>
</feature>
<feature type="disulfide bond" evidence="1">
    <location>
        <begin position="195"/>
        <end position="204"/>
    </location>
</feature>
<feature type="disulfide bond" evidence="1">
    <location>
        <begin position="199"/>
        <end position="212"/>
    </location>
</feature>
<feature type="disulfide bond" evidence="1">
    <location>
        <begin position="220"/>
        <end position="228"/>
    </location>
</feature>
<feature type="disulfide bond" evidence="1">
    <location>
        <begin position="224"/>
        <end position="236"/>
    </location>
</feature>
<feature type="disulfide bond" evidence="1">
    <location>
        <begin position="237"/>
        <end position="245"/>
    </location>
</feature>
<feature type="disulfide bond" evidence="1">
    <location>
        <begin position="241"/>
        <end position="253"/>
    </location>
</feature>
<feature type="disulfide bond" evidence="1">
    <location>
        <begin position="256"/>
        <end position="265"/>
    </location>
</feature>
<feature type="disulfide bond" evidence="1">
    <location>
        <begin position="269"/>
        <end position="296"/>
    </location>
</feature>
<feature type="disulfide bond" evidence="1">
    <location>
        <begin position="300"/>
        <end position="311"/>
    </location>
</feature>
<feature type="disulfide bond" evidence="1">
    <location>
        <begin position="315"/>
        <end position="330"/>
    </location>
</feature>
<feature type="disulfide bond" evidence="1">
    <location>
        <begin position="333"/>
        <end position="337"/>
    </location>
</feature>
<feature type="disulfide bond" evidence="1">
    <location>
        <begin position="504"/>
        <end position="513"/>
    </location>
</feature>
<feature type="disulfide bond" evidence="1">
    <location>
        <begin position="508"/>
        <end position="521"/>
    </location>
</feature>
<feature type="disulfide bond" evidence="1">
    <location>
        <begin position="524"/>
        <end position="533"/>
    </location>
</feature>
<feature type="disulfide bond" evidence="1">
    <location>
        <begin position="537"/>
        <end position="553"/>
    </location>
</feature>
<feature type="disulfide bond" evidence="1">
    <location>
        <begin position="556"/>
        <end position="569"/>
    </location>
</feature>
<feature type="disulfide bond" evidence="1">
    <location>
        <begin position="560"/>
        <end position="577"/>
    </location>
</feature>
<feature type="disulfide bond" evidence="1">
    <location>
        <begin position="593"/>
        <end position="615"/>
    </location>
</feature>
<feature type="disulfide bond" evidence="1">
    <location>
        <begin position="618"/>
        <end position="626"/>
    </location>
</feature>
<feature type="disulfide bond" evidence="1">
    <location>
        <begin position="622"/>
        <end position="634"/>
    </location>
</feature>
<dbReference type="EC" id="2.7.10.1"/>
<dbReference type="EMBL" id="X16891">
    <property type="protein sequence ID" value="CAA34770.2"/>
    <property type="molecule type" value="mRNA"/>
</dbReference>
<dbReference type="PIR" id="S06142">
    <property type="entry name" value="S06142"/>
</dbReference>
<dbReference type="SMR" id="P13388"/>
<dbReference type="STRING" id="8083.ENSXMAP00000008832"/>
<dbReference type="GlyCosmos" id="P13388">
    <property type="glycosylation" value="10 sites, No reported glycans"/>
</dbReference>
<dbReference type="InParanoid" id="P13388"/>
<dbReference type="BRENDA" id="2.7.10.1">
    <property type="organism ID" value="6733"/>
</dbReference>
<dbReference type="Proteomes" id="UP000002852">
    <property type="component" value="Unassembled WGS sequence"/>
</dbReference>
<dbReference type="GO" id="GO:0009925">
    <property type="term" value="C:basal plasma membrane"/>
    <property type="evidence" value="ECO:0007669"/>
    <property type="project" value="TreeGrafter"/>
</dbReference>
<dbReference type="GO" id="GO:0043235">
    <property type="term" value="C:receptor complex"/>
    <property type="evidence" value="ECO:0007669"/>
    <property type="project" value="TreeGrafter"/>
</dbReference>
<dbReference type="GO" id="GO:0005524">
    <property type="term" value="F:ATP binding"/>
    <property type="evidence" value="ECO:0007669"/>
    <property type="project" value="UniProtKB-KW"/>
</dbReference>
<dbReference type="GO" id="GO:0048408">
    <property type="term" value="F:epidermal growth factor binding"/>
    <property type="evidence" value="ECO:0007669"/>
    <property type="project" value="TreeGrafter"/>
</dbReference>
<dbReference type="GO" id="GO:0005006">
    <property type="term" value="F:epidermal growth factor receptor activity"/>
    <property type="evidence" value="ECO:0007669"/>
    <property type="project" value="TreeGrafter"/>
</dbReference>
<dbReference type="GO" id="GO:0043066">
    <property type="term" value="P:negative regulation of apoptotic process"/>
    <property type="evidence" value="ECO:0007669"/>
    <property type="project" value="TreeGrafter"/>
</dbReference>
<dbReference type="GO" id="GO:0022008">
    <property type="term" value="P:neurogenesis"/>
    <property type="evidence" value="ECO:0007669"/>
    <property type="project" value="TreeGrafter"/>
</dbReference>
<dbReference type="GO" id="GO:0050679">
    <property type="term" value="P:positive regulation of epithelial cell proliferation"/>
    <property type="evidence" value="ECO:0007669"/>
    <property type="project" value="TreeGrafter"/>
</dbReference>
<dbReference type="GO" id="GO:0009966">
    <property type="term" value="P:regulation of signal transduction"/>
    <property type="evidence" value="ECO:0007669"/>
    <property type="project" value="UniProtKB-ARBA"/>
</dbReference>
<dbReference type="CDD" id="cd00064">
    <property type="entry name" value="FU"/>
    <property type="match status" value="3"/>
</dbReference>
<dbReference type="CDD" id="cd05108">
    <property type="entry name" value="PTKc_EGFR"/>
    <property type="match status" value="1"/>
</dbReference>
<dbReference type="FunFam" id="1.10.510.10:FF:000027">
    <property type="entry name" value="Receptor protein-tyrosine kinase"/>
    <property type="match status" value="1"/>
</dbReference>
<dbReference type="FunFam" id="2.10.220.10:FF:000001">
    <property type="entry name" value="Receptor protein-tyrosine kinase"/>
    <property type="match status" value="1"/>
</dbReference>
<dbReference type="FunFam" id="2.10.220.10:FF:000002">
    <property type="entry name" value="Receptor protein-tyrosine kinase"/>
    <property type="match status" value="1"/>
</dbReference>
<dbReference type="FunFam" id="3.80.20.20:FF:000006">
    <property type="entry name" value="Receptor protein-tyrosine kinase"/>
    <property type="match status" value="1"/>
</dbReference>
<dbReference type="FunFam" id="3.30.200.20:FF:000276">
    <property type="entry name" value="Receptor tyrosine-protein kinase erbB-3"/>
    <property type="match status" value="1"/>
</dbReference>
<dbReference type="Gene3D" id="6.10.250.2930">
    <property type="match status" value="1"/>
</dbReference>
<dbReference type="Gene3D" id="2.10.220.10">
    <property type="entry name" value="Hormone Receptor, Insulin-like Growth Factor Receptor 1, Chain A, domain 2"/>
    <property type="match status" value="3"/>
</dbReference>
<dbReference type="Gene3D" id="3.30.200.20">
    <property type="entry name" value="Phosphorylase Kinase, domain 1"/>
    <property type="match status" value="1"/>
</dbReference>
<dbReference type="Gene3D" id="3.80.20.20">
    <property type="entry name" value="Receptor L-domain"/>
    <property type="match status" value="2"/>
</dbReference>
<dbReference type="Gene3D" id="1.10.510.10">
    <property type="entry name" value="Transferase(Phosphotransferase) domain 1"/>
    <property type="match status" value="1"/>
</dbReference>
<dbReference type="InterPro" id="IPR044912">
    <property type="entry name" value="Egfr_JX_dom"/>
</dbReference>
<dbReference type="InterPro" id="IPR006211">
    <property type="entry name" value="Furin-like_Cys-rich_dom"/>
</dbReference>
<dbReference type="InterPro" id="IPR006212">
    <property type="entry name" value="Furin_repeat"/>
</dbReference>
<dbReference type="InterPro" id="IPR032778">
    <property type="entry name" value="GF_recep_IV"/>
</dbReference>
<dbReference type="InterPro" id="IPR009030">
    <property type="entry name" value="Growth_fac_rcpt_cys_sf"/>
</dbReference>
<dbReference type="InterPro" id="IPR011009">
    <property type="entry name" value="Kinase-like_dom_sf"/>
</dbReference>
<dbReference type="InterPro" id="IPR000719">
    <property type="entry name" value="Prot_kinase_dom"/>
</dbReference>
<dbReference type="InterPro" id="IPR017441">
    <property type="entry name" value="Protein_kinase_ATP_BS"/>
</dbReference>
<dbReference type="InterPro" id="IPR000494">
    <property type="entry name" value="Rcpt_L-dom"/>
</dbReference>
<dbReference type="InterPro" id="IPR036941">
    <property type="entry name" value="Rcpt_L-dom_sf"/>
</dbReference>
<dbReference type="InterPro" id="IPR050122">
    <property type="entry name" value="RTK"/>
</dbReference>
<dbReference type="InterPro" id="IPR001245">
    <property type="entry name" value="Ser-Thr/Tyr_kinase_cat_dom"/>
</dbReference>
<dbReference type="InterPro" id="IPR049328">
    <property type="entry name" value="TM_ErbB1"/>
</dbReference>
<dbReference type="InterPro" id="IPR008266">
    <property type="entry name" value="Tyr_kinase_AS"/>
</dbReference>
<dbReference type="InterPro" id="IPR020635">
    <property type="entry name" value="Tyr_kinase_cat_dom"/>
</dbReference>
<dbReference type="InterPro" id="IPR016245">
    <property type="entry name" value="Tyr_kinase_EGF/ERB/XmrK_rcpt"/>
</dbReference>
<dbReference type="PANTHER" id="PTHR24416:SF91">
    <property type="entry name" value="EPIDERMAL GROWTH FACTOR RECEPTOR"/>
    <property type="match status" value="1"/>
</dbReference>
<dbReference type="PANTHER" id="PTHR24416">
    <property type="entry name" value="TYROSINE-PROTEIN KINASE RECEPTOR"/>
    <property type="match status" value="1"/>
</dbReference>
<dbReference type="Pfam" id="PF00757">
    <property type="entry name" value="Furin-like"/>
    <property type="match status" value="1"/>
</dbReference>
<dbReference type="Pfam" id="PF14843">
    <property type="entry name" value="GF_recep_IV"/>
    <property type="match status" value="1"/>
</dbReference>
<dbReference type="Pfam" id="PF07714">
    <property type="entry name" value="PK_Tyr_Ser-Thr"/>
    <property type="match status" value="1"/>
</dbReference>
<dbReference type="Pfam" id="PF01030">
    <property type="entry name" value="Recep_L_domain"/>
    <property type="match status" value="2"/>
</dbReference>
<dbReference type="Pfam" id="PF21314">
    <property type="entry name" value="TM_ErbB1"/>
    <property type="match status" value="1"/>
</dbReference>
<dbReference type="PIRSF" id="PIRSF000619">
    <property type="entry name" value="TyrPK_EGF-R"/>
    <property type="match status" value="1"/>
</dbReference>
<dbReference type="PRINTS" id="PR00109">
    <property type="entry name" value="TYRKINASE"/>
</dbReference>
<dbReference type="SMART" id="SM00261">
    <property type="entry name" value="FU"/>
    <property type="match status" value="5"/>
</dbReference>
<dbReference type="SMART" id="SM00219">
    <property type="entry name" value="TyrKc"/>
    <property type="match status" value="1"/>
</dbReference>
<dbReference type="SUPFAM" id="SSF57184">
    <property type="entry name" value="Growth factor receptor domain"/>
    <property type="match status" value="2"/>
</dbReference>
<dbReference type="SUPFAM" id="SSF52058">
    <property type="entry name" value="L domain-like"/>
    <property type="match status" value="2"/>
</dbReference>
<dbReference type="SUPFAM" id="SSF56112">
    <property type="entry name" value="Protein kinase-like (PK-like)"/>
    <property type="match status" value="1"/>
</dbReference>
<dbReference type="PROSITE" id="PS00107">
    <property type="entry name" value="PROTEIN_KINASE_ATP"/>
    <property type="match status" value="1"/>
</dbReference>
<dbReference type="PROSITE" id="PS50011">
    <property type="entry name" value="PROTEIN_KINASE_DOM"/>
    <property type="match status" value="1"/>
</dbReference>
<dbReference type="PROSITE" id="PS00109">
    <property type="entry name" value="PROTEIN_KINASE_TYR"/>
    <property type="match status" value="1"/>
</dbReference>
<reference key="1">
    <citation type="journal article" date="1989" name="Nature">
        <title>Novel putative receptor tyrosine kinase encoded by the melanoma-inducing Tu locus in Xiphophorus.</title>
        <authorList>
            <person name="Wittbrodt J."/>
            <person name="Adam D."/>
            <person name="Malitschek B."/>
            <person name="Maueler W."/>
            <person name="Raulf F."/>
            <person name="Telling A."/>
            <person name="Robertson S.M."/>
            <person name="Schartl M."/>
        </authorList>
    </citation>
    <scope>NUCLEOTIDE SEQUENCE [MRNA]</scope>
</reference>
<reference key="2">
    <citation type="submission" date="2000-07" db="EMBL/GenBank/DDBJ databases">
        <authorList>
            <person name="Schartl M."/>
        </authorList>
    </citation>
    <scope>SEQUENCE REVISION TO 515</scope>
</reference>
<reference key="3">
    <citation type="journal article" date="1991" name="Oncogene">
        <title>Transcriptional activation of the melanoma inducing Xmrk oncogene in Xiphophorus.</title>
        <authorList>
            <person name="Adam D."/>
            <person name="Maueler W."/>
            <person name="Schartl M."/>
        </authorList>
    </citation>
    <scope>TRANSCRIPTIONAL REGULATION</scope>
</reference>
<proteinExistence type="evidence at transcript level"/>
<name>XMRK_XIPMA</name>
<accession>P13388</accession>
<organism>
    <name type="scientific">Xiphophorus maculatus</name>
    <name type="common">Southern platyfish</name>
    <name type="synonym">Platypoecilus maculatus</name>
    <dbReference type="NCBI Taxonomy" id="8083"/>
    <lineage>
        <taxon>Eukaryota</taxon>
        <taxon>Metazoa</taxon>
        <taxon>Chordata</taxon>
        <taxon>Craniata</taxon>
        <taxon>Vertebrata</taxon>
        <taxon>Euteleostomi</taxon>
        <taxon>Actinopterygii</taxon>
        <taxon>Neopterygii</taxon>
        <taxon>Teleostei</taxon>
        <taxon>Neoteleostei</taxon>
        <taxon>Acanthomorphata</taxon>
        <taxon>Ovalentaria</taxon>
        <taxon>Atherinomorphae</taxon>
        <taxon>Cyprinodontiformes</taxon>
        <taxon>Poeciliidae</taxon>
        <taxon>Poeciliinae</taxon>
        <taxon>Xiphophorus</taxon>
    </lineage>
</organism>
<sequence length="1167" mass="129934">MEFLRGGAALLQLLLVLSISRCCSTDPDRKVCQGTSNQMTMLDNHYLKMKKMYSGCNVVLENLEITYTQENQDLSFLQSIQEVGGYVLIAMNEVSTIPLVNLRLIRGQNLYEGNFTLLVMSNYQKNPSSPDVYQVGLKQLQLSNLTEILSGGVKVSHNPLLCNVETINWWDIVDKTSNPTMNLIPHAFERQCQKCDHGCVNGSCWAPGPGHCQKFTKLLCAEQCNRRCRGPKPIDCCNEHCAGGCTGPRATDCLACRDFNDDGTCKDTCPPPKIYDIVSHQVVDNPNIKYTFGAACVKECPSNYVVTEGACVRSCSAGMLEVDENGKRSCKPCDGVCPKVCDGIGIGSLSNTIAVNSTNIRSFSNCTKINGDIILNRNSFEGDPHYKIGTMDPEHLWNLTTVKEITGYLVIMWWPENMTSLSVFQNLEIIRGRTTFSRGFSFVVVQVRHLQWLGLRSLKEVSAGNVILKNTLQLRYANTINWRRLFRSEDQSIEYDARTENQTCNNECSEDGCWGPGPTMCVSCLHVDRGGRCVASCNLLQGEPREAQVDGRCVQCHQECLVQTDSLTCYGPGPANCSKSAHFQDGPQCIPRCPHGILGDGDTLIWKYADKMGQCQPCHQNCTQGCSGPGLSGCRGDIVSHSSLAVGLVSGLLITVIVALLIVVLLRRRRIKRKRTIRCLLQEKELVEPLTPSGQAPNQAFLRILKETEFKKDRVLGSGAFGTVYKGLWNPDGENIRIPVAIKVLREATSPKVNQEVLDEAYVMASVDHPHVCRLLGICLTSAVQLVTQLMPYGCLLDYVRQHQERICGQWLLNWCVQIAKGMNYLEERHLVHRDLAARNVLLKNPNHVKITDFGLSKLLTADEKEYQADGGKVPIKWMALESILQWTYTHQSDVWSYGVTVWELMTFGSKPYDGIPAKEIASVLENGERLPQPPICTIEVYMIILKCWMIDPSSRPRFRELVGEFSQMARDPSRYLVIQGNLPSLSDRRLFSRLLSSDDDVVDADEYLLPYKRINRQGSEPCIPPTGHPVRENSITLRNISDPTQNALEKDLDGHEYVNQPGSETSSRLSDIYNPNYEDLTDGWGPVSLSSQEAETNFSRPEYLNTNQNSLPLVSSGSMDDPDYQAGYQAAFLPQTGALTGNGMFLPAAENLEYLGQGGALYTPVR</sequence>
<keyword id="KW-0067">ATP-binding</keyword>
<keyword id="KW-1015">Disulfide bond</keyword>
<keyword id="KW-0325">Glycoprotein</keyword>
<keyword id="KW-0418">Kinase</keyword>
<keyword id="KW-0472">Membrane</keyword>
<keyword id="KW-0547">Nucleotide-binding</keyword>
<keyword id="KW-0597">Phosphoprotein</keyword>
<keyword id="KW-0656">Proto-oncogene</keyword>
<keyword id="KW-0675">Receptor</keyword>
<keyword id="KW-1185">Reference proteome</keyword>
<keyword id="KW-0732">Signal</keyword>
<keyword id="KW-0808">Transferase</keyword>
<keyword id="KW-0812">Transmembrane</keyword>
<keyword id="KW-1133">Transmembrane helix</keyword>
<keyword id="KW-0829">Tyrosine-protein kinase</keyword>
<evidence type="ECO:0000250" key="1"/>
<evidence type="ECO:0000255" key="2"/>
<evidence type="ECO:0000255" key="3">
    <source>
        <dbReference type="PROSITE-ProRule" id="PRU00159"/>
    </source>
</evidence>
<evidence type="ECO:0000255" key="4">
    <source>
        <dbReference type="PROSITE-ProRule" id="PRU10028"/>
    </source>
</evidence>